<comment type="function">
    <text evidence="1">Produces ATP from ADP in the presence of a proton gradient across the membrane. The catalytic sites are hosted primarily by the beta subunits.</text>
</comment>
<comment type="catalytic activity">
    <reaction evidence="1">
        <text>ATP + H2O + 4 H(+)(in) = ADP + phosphate + 5 H(+)(out)</text>
        <dbReference type="Rhea" id="RHEA:57720"/>
        <dbReference type="ChEBI" id="CHEBI:15377"/>
        <dbReference type="ChEBI" id="CHEBI:15378"/>
        <dbReference type="ChEBI" id="CHEBI:30616"/>
        <dbReference type="ChEBI" id="CHEBI:43474"/>
        <dbReference type="ChEBI" id="CHEBI:456216"/>
        <dbReference type="EC" id="7.1.2.2"/>
    </reaction>
</comment>
<comment type="subunit">
    <text evidence="1">F-type ATPases have 2 components, CF(1) - the catalytic core - and CF(0) - the membrane proton channel. CF(1) has five subunits: alpha(3), beta(3), gamma(1), delta(1), epsilon(1). CF(0) has three main subunits: a(1), b(2) and c(9-12). The alpha and beta chains form an alternating ring which encloses part of the gamma chain. CF(1) is attached to CF(0) by a central stalk formed by the gamma and epsilon chains, while a peripheral stalk is formed by the delta and b chains.</text>
</comment>
<comment type="subcellular location">
    <subcellularLocation>
        <location evidence="1">Cell inner membrane</location>
        <topology evidence="1">Peripheral membrane protein</topology>
    </subcellularLocation>
</comment>
<comment type="similarity">
    <text evidence="1">Belongs to the ATPase alpha/beta chains family.</text>
</comment>
<comment type="sequence caution" evidence="2">
    <conflict type="erroneous initiation">
        <sequence resource="EMBL-CDS" id="ABI72887"/>
    </conflict>
</comment>
<feature type="chain" id="PRO_0000339587" description="ATP synthase subunit beta 2">
    <location>
        <begin position="1"/>
        <end position="474"/>
    </location>
</feature>
<feature type="binding site" evidence="1">
    <location>
        <begin position="156"/>
        <end position="163"/>
    </location>
    <ligand>
        <name>ATP</name>
        <dbReference type="ChEBI" id="CHEBI:30616"/>
    </ligand>
</feature>
<evidence type="ECO:0000255" key="1">
    <source>
        <dbReference type="HAMAP-Rule" id="MF_01347"/>
    </source>
</evidence>
<evidence type="ECO:0000305" key="2"/>
<accession>Q07YM7</accession>
<gene>
    <name evidence="1" type="primary">atpD2</name>
    <name type="ordered locus">Sfri_3049</name>
</gene>
<reference key="1">
    <citation type="submission" date="2006-08" db="EMBL/GenBank/DDBJ databases">
        <title>Complete sequence of Shewanella frigidimarina NCIMB 400.</title>
        <authorList>
            <consortium name="US DOE Joint Genome Institute"/>
            <person name="Copeland A."/>
            <person name="Lucas S."/>
            <person name="Lapidus A."/>
            <person name="Barry K."/>
            <person name="Detter J.C."/>
            <person name="Glavina del Rio T."/>
            <person name="Hammon N."/>
            <person name="Israni S."/>
            <person name="Dalin E."/>
            <person name="Tice H."/>
            <person name="Pitluck S."/>
            <person name="Fredrickson J.K."/>
            <person name="Kolker E."/>
            <person name="McCuel L.A."/>
            <person name="DiChristina T."/>
            <person name="Nealson K.H."/>
            <person name="Newman D."/>
            <person name="Tiedje J.M."/>
            <person name="Zhou J."/>
            <person name="Romine M.F."/>
            <person name="Culley D.E."/>
            <person name="Serres M."/>
            <person name="Chertkov O."/>
            <person name="Brettin T."/>
            <person name="Bruce D."/>
            <person name="Han C."/>
            <person name="Tapia R."/>
            <person name="Gilna P."/>
            <person name="Schmutz J."/>
            <person name="Larimer F."/>
            <person name="Land M."/>
            <person name="Hauser L."/>
            <person name="Kyrpides N."/>
            <person name="Mikhailova N."/>
            <person name="Richardson P."/>
        </authorList>
    </citation>
    <scope>NUCLEOTIDE SEQUENCE [LARGE SCALE GENOMIC DNA]</scope>
    <source>
        <strain>NCIMB 400</strain>
    </source>
</reference>
<protein>
    <recommendedName>
        <fullName evidence="1">ATP synthase subunit beta 2</fullName>
        <ecNumber evidence="1">7.1.2.2</ecNumber>
    </recommendedName>
    <alternativeName>
        <fullName evidence="1">ATP synthase F1 sector subunit beta 2</fullName>
    </alternativeName>
    <alternativeName>
        <fullName evidence="1">F-ATPase subunit beta 2</fullName>
    </alternativeName>
</protein>
<proteinExistence type="inferred from homology"/>
<organism>
    <name type="scientific">Shewanella frigidimarina (strain NCIMB 400)</name>
    <dbReference type="NCBI Taxonomy" id="318167"/>
    <lineage>
        <taxon>Bacteria</taxon>
        <taxon>Pseudomonadati</taxon>
        <taxon>Pseudomonadota</taxon>
        <taxon>Gammaproteobacteria</taxon>
        <taxon>Alteromonadales</taxon>
        <taxon>Shewanellaceae</taxon>
        <taxon>Shewanella</taxon>
    </lineage>
</organism>
<name>ATPB2_SHEFN</name>
<dbReference type="EC" id="7.1.2.2" evidence="1"/>
<dbReference type="EMBL" id="CP000447">
    <property type="protein sequence ID" value="ABI72887.1"/>
    <property type="status" value="ALT_INIT"/>
    <property type="molecule type" value="Genomic_DNA"/>
</dbReference>
<dbReference type="RefSeq" id="WP_041413177.1">
    <property type="nucleotide sequence ID" value="NC_008345.1"/>
</dbReference>
<dbReference type="SMR" id="Q07YM7"/>
<dbReference type="STRING" id="318167.Sfri_3049"/>
<dbReference type="KEGG" id="sfr:Sfri_3049"/>
<dbReference type="eggNOG" id="COG0055">
    <property type="taxonomic scope" value="Bacteria"/>
</dbReference>
<dbReference type="HOGENOM" id="CLU_022398_0_2_6"/>
<dbReference type="Proteomes" id="UP000000684">
    <property type="component" value="Chromosome"/>
</dbReference>
<dbReference type="GO" id="GO:0005886">
    <property type="term" value="C:plasma membrane"/>
    <property type="evidence" value="ECO:0007669"/>
    <property type="project" value="UniProtKB-SubCell"/>
</dbReference>
<dbReference type="GO" id="GO:0045259">
    <property type="term" value="C:proton-transporting ATP synthase complex"/>
    <property type="evidence" value="ECO:0007669"/>
    <property type="project" value="UniProtKB-KW"/>
</dbReference>
<dbReference type="GO" id="GO:0005524">
    <property type="term" value="F:ATP binding"/>
    <property type="evidence" value="ECO:0007669"/>
    <property type="project" value="UniProtKB-UniRule"/>
</dbReference>
<dbReference type="GO" id="GO:0016887">
    <property type="term" value="F:ATP hydrolysis activity"/>
    <property type="evidence" value="ECO:0007669"/>
    <property type="project" value="InterPro"/>
</dbReference>
<dbReference type="GO" id="GO:0046933">
    <property type="term" value="F:proton-transporting ATP synthase activity, rotational mechanism"/>
    <property type="evidence" value="ECO:0007669"/>
    <property type="project" value="UniProtKB-UniRule"/>
</dbReference>
<dbReference type="GO" id="GO:0046961">
    <property type="term" value="F:proton-transporting ATPase activity, rotational mechanism"/>
    <property type="evidence" value="ECO:0007669"/>
    <property type="project" value="InterPro"/>
</dbReference>
<dbReference type="CDD" id="cd18110">
    <property type="entry name" value="ATP-synt_F1_beta_C"/>
    <property type="match status" value="1"/>
</dbReference>
<dbReference type="CDD" id="cd18115">
    <property type="entry name" value="ATP-synt_F1_beta_N"/>
    <property type="match status" value="1"/>
</dbReference>
<dbReference type="CDD" id="cd01133">
    <property type="entry name" value="F1-ATPase_beta_CD"/>
    <property type="match status" value="1"/>
</dbReference>
<dbReference type="FunFam" id="1.10.1140.10:FF:000006">
    <property type="entry name" value="ATP synthase subunit beta"/>
    <property type="match status" value="1"/>
</dbReference>
<dbReference type="FunFam" id="3.40.50.300:FF:001630">
    <property type="entry name" value="ATP synthase subunit beta"/>
    <property type="match status" value="1"/>
</dbReference>
<dbReference type="Gene3D" id="2.40.10.170">
    <property type="match status" value="1"/>
</dbReference>
<dbReference type="Gene3D" id="1.10.1140.10">
    <property type="entry name" value="Bovine Mitochondrial F1-atpase, Atp Synthase Beta Chain, Chain D, domain 3"/>
    <property type="match status" value="1"/>
</dbReference>
<dbReference type="Gene3D" id="3.40.50.300">
    <property type="entry name" value="P-loop containing nucleotide triphosphate hydrolases"/>
    <property type="match status" value="1"/>
</dbReference>
<dbReference type="HAMAP" id="MF_01347">
    <property type="entry name" value="ATP_synth_beta_bact"/>
    <property type="match status" value="1"/>
</dbReference>
<dbReference type="InterPro" id="IPR003593">
    <property type="entry name" value="AAA+_ATPase"/>
</dbReference>
<dbReference type="InterPro" id="IPR017691">
    <property type="entry name" value="Alt_ATPase_F1_bsu"/>
</dbReference>
<dbReference type="InterPro" id="IPR055190">
    <property type="entry name" value="ATP-synt_VA_C"/>
</dbReference>
<dbReference type="InterPro" id="IPR005722">
    <property type="entry name" value="ATP_synth_F1_bsu"/>
</dbReference>
<dbReference type="InterPro" id="IPR020003">
    <property type="entry name" value="ATPase_a/bsu_AS"/>
</dbReference>
<dbReference type="InterPro" id="IPR050053">
    <property type="entry name" value="ATPase_alpha/beta_chains"/>
</dbReference>
<dbReference type="InterPro" id="IPR004100">
    <property type="entry name" value="ATPase_F1/V1/A1_a/bsu_N"/>
</dbReference>
<dbReference type="InterPro" id="IPR036121">
    <property type="entry name" value="ATPase_F1/V1/A1_a/bsu_N_sf"/>
</dbReference>
<dbReference type="InterPro" id="IPR000194">
    <property type="entry name" value="ATPase_F1/V1/A1_a/bsu_nucl-bd"/>
</dbReference>
<dbReference type="InterPro" id="IPR024034">
    <property type="entry name" value="ATPase_F1/V1_b/a_C"/>
</dbReference>
<dbReference type="InterPro" id="IPR027417">
    <property type="entry name" value="P-loop_NTPase"/>
</dbReference>
<dbReference type="NCBIfam" id="TIGR03305">
    <property type="entry name" value="alt_F1F0_F1_bet"/>
    <property type="match status" value="1"/>
</dbReference>
<dbReference type="NCBIfam" id="TIGR01039">
    <property type="entry name" value="atpD"/>
    <property type="match status" value="1"/>
</dbReference>
<dbReference type="PANTHER" id="PTHR15184">
    <property type="entry name" value="ATP SYNTHASE"/>
    <property type="match status" value="1"/>
</dbReference>
<dbReference type="PANTHER" id="PTHR15184:SF71">
    <property type="entry name" value="ATP SYNTHASE SUBUNIT BETA, MITOCHONDRIAL"/>
    <property type="match status" value="1"/>
</dbReference>
<dbReference type="Pfam" id="PF00006">
    <property type="entry name" value="ATP-synt_ab"/>
    <property type="match status" value="1"/>
</dbReference>
<dbReference type="Pfam" id="PF02874">
    <property type="entry name" value="ATP-synt_ab_N"/>
    <property type="match status" value="1"/>
</dbReference>
<dbReference type="Pfam" id="PF22919">
    <property type="entry name" value="ATP-synt_VA_C"/>
    <property type="match status" value="1"/>
</dbReference>
<dbReference type="SMART" id="SM00382">
    <property type="entry name" value="AAA"/>
    <property type="match status" value="1"/>
</dbReference>
<dbReference type="SUPFAM" id="SSF47917">
    <property type="entry name" value="C-terminal domain of alpha and beta subunits of F1 ATP synthase"/>
    <property type="match status" value="1"/>
</dbReference>
<dbReference type="SUPFAM" id="SSF50615">
    <property type="entry name" value="N-terminal domain of alpha and beta subunits of F1 ATP synthase"/>
    <property type="match status" value="1"/>
</dbReference>
<dbReference type="SUPFAM" id="SSF52540">
    <property type="entry name" value="P-loop containing nucleoside triphosphate hydrolases"/>
    <property type="match status" value="1"/>
</dbReference>
<dbReference type="PROSITE" id="PS00152">
    <property type="entry name" value="ATPASE_ALPHA_BETA"/>
    <property type="match status" value="1"/>
</dbReference>
<sequence>MMDRKNASPNSGTVIAIRGSVVDILFAEQLPPIRSLLTTGHQHQILIEVFSQLDEHRVRCIALTPTQGLARGMLVEDSGGPLLAPVGKTILSRMFDVFGNAIDRKAPPIGTQWRSVHNEPPAIAQLATKSQVFETGIKMIDVLMPLERGGKAGLFGGAGVGKTVLLTEMIHNMVGQHAGVSIFCGIGERCREGEELYREMKTAGVLDNMVMVFGQMNEPPGARFRVGHAALTMAEYFRDDEHRDVLLLIDNIFRFIQAGMEVSGLMGQMPARLGYQPTLGTELSQLEDRIANTDSGAITSIQAVYVPADDFTDPAAVHTFSHLSASIVLSRKRASEGLYPAIDPLLSNSKMATPSIIGRRHYDLAQKIRSTLAQYAELKDIIAMLGMEQLSPADHKIVARARRLERFFTQPFFTTEQFTSMPGKLVSLNDALDGCERILHDEFKDYPESALYMIGSIDEAVSKYRPKLDRVNSQ</sequence>
<keyword id="KW-0066">ATP synthesis</keyword>
<keyword id="KW-0067">ATP-binding</keyword>
<keyword id="KW-0997">Cell inner membrane</keyword>
<keyword id="KW-1003">Cell membrane</keyword>
<keyword id="KW-0139">CF(1)</keyword>
<keyword id="KW-0375">Hydrogen ion transport</keyword>
<keyword id="KW-0406">Ion transport</keyword>
<keyword id="KW-0472">Membrane</keyword>
<keyword id="KW-0547">Nucleotide-binding</keyword>
<keyword id="KW-1185">Reference proteome</keyword>
<keyword id="KW-1278">Translocase</keyword>
<keyword id="KW-0813">Transport</keyword>